<sequence>MAKDPTFEEVTGCQRALFEWADSYDTKDWERLKKCVAPTLRIDYRSFLDKLWEAMPSDEFILMASDPRFLGNPLLKTQHFVGLSTWQKISPDEIEGTHQLRVPHQRYTDSNMKEVAVKGHAHGIATMWYKRVEDEWKFAGVCPQIRWAEFDYDKVFAEGKDHFGENGGNGEHAV</sequence>
<organism>
    <name type="scientific">Paecilomyces divaricatus</name>
    <name type="common">Penicillium divaricatum</name>
    <dbReference type="NCBI Taxonomy" id="644132"/>
    <lineage>
        <taxon>Eukaryota</taxon>
        <taxon>Fungi</taxon>
        <taxon>Dikarya</taxon>
        <taxon>Ascomycota</taxon>
        <taxon>Pezizomycotina</taxon>
        <taxon>Eurotiomycetes</taxon>
        <taxon>Eurotiomycetidae</taxon>
        <taxon>Eurotiales</taxon>
        <taxon>Thermoascaceae</taxon>
        <taxon>Paecilomyces</taxon>
    </lineage>
</organism>
<keyword id="KW-0456">Lyase</keyword>
<proteinExistence type="inferred from homology"/>
<comment type="function">
    <text evidence="2">Dehydratase; part of the gene cluster that mediates the biosynthesis of agnestins, dihydroxy-xanthone metabolites (PubMed:30746079). The pathway begins with the assembly and cyclization of atrochrysone thioester by the non-reducing polyketide synthase Agnpks1 (PubMed:30746079). The atrochrysone carboxyl ACP thioesterase AgnL7 then breaks the thioester bond and releases the atrochrysone carboxylic acid as the first enzyme-free intermediate (PubMed:30746079). The decarboxylase AgnL1 then catalyzes the concerted decarboxylation-elimination required to convert atochrysone carboxylic acid into emodin anthrone, which is further oxidized to emodin by the anthrone oxygenase AgnL2 (PubMed:30746079). Emodin then undergoes reduction catalyzed by the oxidoreductase AgnL4 to yield the dihydroquinone tautomer which is the substrate for reduction by the short chain dehydrogenase AgnL6 reduction to produce hydroxyketone, followed by AgnL8 dehydration and likely spontaneous autoxidation to chrysophanol (PubMed:30746079). Baeyer-Villiger oxidation by the oxidase AgnL3 leads to monodictyphenone via cleavage of the C-10/C-10a bond of chrysophanol (PubMed:30746079). Alternative cleavage at the C-4a/C-10 bond of chrysophanol also leads to the formation some cephalone F (PubMed:30746079). Further conversion to agnestins A and B, requires reduction to dihydro-monodictyphenone, oxidation to agnestin C probably via an epoxide, and rearrangement to either agnestin A or agnestin B directly, although agnestin A or agnestin B can also interconvert (PubMed:30746079). Within the cluster, AgnR1 is the only unassigned oxidoreductase present which could be involved in this conversion. However, AgnR1 seems not to be involved in this step, and thus genes involved in the proposed oxidation/reduction may be located elsewhere on the genome (PubMed:30746079). Further agnestin A derivatives are probably formed by spontaneous decarboxylations, dehydrations and methanolysis reactions (PubMed:30746079).</text>
</comment>
<comment type="pathway">
    <text evidence="5">Secondary metabolite biosynthesis.</text>
</comment>
<comment type="subunit">
    <text evidence="1">Homotrimer (By similarity). Each subunit contains an active site, located in the central part of the hydrophobic core of the monomer, which functions independently (By similarity).</text>
</comment>
<comment type="similarity">
    <text evidence="4">Belongs to the scytalone dehydratase family.</text>
</comment>
<protein>
    <recommendedName>
        <fullName evidence="3">Dehydratase AgnL8</fullName>
        <ecNumber evidence="5">4.2.1.-</ecNumber>
    </recommendedName>
    <alternativeName>
        <fullName evidence="3">Agnestins biosynthesis cluster protein L8</fullName>
    </alternativeName>
</protein>
<reference key="1">
    <citation type="journal article" date="2019" name="Chem. Sci.">
        <title>Characterisation of the biosynthetic pathway to agnestins A and B reveals the reductive route to chrysophanol in fungi.</title>
        <authorList>
            <person name="Szwalbe A.J."/>
            <person name="Williams K."/>
            <person name="Song Z."/>
            <person name="de Mattos-Shipley K."/>
            <person name="Vincent J.L."/>
            <person name="Bailey A.M."/>
            <person name="Willis C.L."/>
            <person name="Cox R.J."/>
            <person name="Simpson T.J."/>
        </authorList>
    </citation>
    <scope>NUCLEOTIDE SEQUENCE [GENOMIC DNA]</scope>
    <scope>FUNCTION</scope>
    <scope>PATHWAY</scope>
    <source>
        <strain>K5013</strain>
    </source>
</reference>
<feature type="chain" id="PRO_0000449020" description="Dehydratase AgnL8">
    <location>
        <begin position="1"/>
        <end position="174"/>
    </location>
</feature>
<feature type="active site" evidence="1">
    <location>
        <position position="79"/>
    </location>
</feature>
<feature type="active site" evidence="1">
    <location>
        <position position="104"/>
    </location>
</feature>
<feature type="binding site" evidence="1">
    <location>
        <position position="24"/>
    </location>
    <ligand>
        <name>substrate</name>
    </ligand>
</feature>
<feature type="binding site" evidence="1">
    <location>
        <position position="44"/>
    </location>
    <ligand>
        <name>substrate</name>
    </ligand>
</feature>
<feature type="binding site" evidence="1">
    <location>
        <position position="47"/>
    </location>
    <ligand>
        <name>substrate</name>
    </ligand>
</feature>
<dbReference type="EC" id="4.2.1.-" evidence="5"/>
<dbReference type="EMBL" id="MH898872">
    <property type="protein sequence ID" value="QBG38880.1"/>
    <property type="molecule type" value="Genomic_DNA"/>
</dbReference>
<dbReference type="SMR" id="A0A411PQN4"/>
<dbReference type="GO" id="GO:0030411">
    <property type="term" value="F:scytalone dehydratase activity"/>
    <property type="evidence" value="ECO:0007669"/>
    <property type="project" value="InterPro"/>
</dbReference>
<dbReference type="GO" id="GO:0006582">
    <property type="term" value="P:melanin metabolic process"/>
    <property type="evidence" value="ECO:0007669"/>
    <property type="project" value="InterPro"/>
</dbReference>
<dbReference type="Gene3D" id="3.10.450.50">
    <property type="match status" value="1"/>
</dbReference>
<dbReference type="InterPro" id="IPR032710">
    <property type="entry name" value="NTF2-like_dom_sf"/>
</dbReference>
<dbReference type="InterPro" id="IPR004235">
    <property type="entry name" value="Scytalone_dehydratase"/>
</dbReference>
<dbReference type="InterPro" id="IPR049884">
    <property type="entry name" value="Scytalone_dh"/>
</dbReference>
<dbReference type="Pfam" id="PF02982">
    <property type="entry name" value="Scytalone_dh"/>
    <property type="match status" value="1"/>
</dbReference>
<dbReference type="PIRSF" id="PIRSF024851">
    <property type="entry name" value="SCD1"/>
    <property type="match status" value="1"/>
</dbReference>
<dbReference type="SUPFAM" id="SSF54427">
    <property type="entry name" value="NTF2-like"/>
    <property type="match status" value="1"/>
</dbReference>
<evidence type="ECO:0000250" key="1">
    <source>
        <dbReference type="UniProtKB" id="P56221"/>
    </source>
</evidence>
<evidence type="ECO:0000269" key="2">
    <source>
    </source>
</evidence>
<evidence type="ECO:0000303" key="3">
    <source>
    </source>
</evidence>
<evidence type="ECO:0000305" key="4"/>
<evidence type="ECO:0000305" key="5">
    <source>
    </source>
</evidence>
<accession>A0A411PQN4</accession>
<name>AGN8_PAEDI</name>
<gene>
    <name evidence="3" type="primary">AgnL8</name>
</gene>